<reference key="1">
    <citation type="journal article" date="1978" name="Proc. Natl. Acad. Sci. U.S.A.">
        <title>Nucleotide sequence of the ampicillin resistance gene of Escherichia coli plasmid pBR322.</title>
        <authorList>
            <person name="Sutcliffe J.G."/>
        </authorList>
    </citation>
    <scope>NUCLEOTIDE SEQUENCE [GENOMIC DNA] (TEM-1)</scope>
    <source>
        <plasmid>R1 (R7268)</plasmid>
        <transposon>Tn3</transposon>
    </source>
</reference>
<reference key="2">
    <citation type="journal article" date="1979" name="Cold Spring Harb. Symp. Quant. Biol.">
        <title>Complete nucleotide sequence of the Escherichia coli plasmid pBR322.</title>
        <authorList>
            <person name="Sutcliffe J.G."/>
        </authorList>
    </citation>
    <scope>NUCLEOTIDE SEQUENCE [GENOMIC DNA] (TEM-1)</scope>
    <source>
        <plasmid>R1 (R7268)</plasmid>
        <transposon>Tn3</transposon>
    </source>
</reference>
<reference key="3">
    <citation type="journal article" date="1986" name="Adv. Biophys.">
        <title>DNA replication of the resistance plasmid R100 and its control.</title>
        <authorList>
            <person name="Ohtsubo H."/>
            <person name="Ryder T.B."/>
            <person name="Maeda Y."/>
            <person name="Armstrong K."/>
            <person name="Ohtsubo E."/>
        </authorList>
    </citation>
    <scope>NUCLEOTIDE SEQUENCE [GENOMIC DNA] (TEM-1)</scope>
    <source>
        <plasmid>IncFII R100 (NR1)</plasmid>
    </source>
</reference>
<reference key="4">
    <citation type="journal article" date="1978" name="Proc. Natl. Acad. Sci. U.S.A.">
        <title>Partial amino acid sequence of penicillinase coded by Escherichia coli plasmid R6K.</title>
        <authorList>
            <person name="Ambler R.P."/>
            <person name="Scott G.K."/>
        </authorList>
    </citation>
    <scope>PROTEIN SEQUENCE OF 24-286 (TEM-2)</scope>
    <source>
        <plasmid>R6K</plasmid>
        <transposon>Tn1</transposon>
    </source>
</reference>
<reference key="5">
    <citation type="journal article" date="1988" name="FEMS Microbiol. Lett.">
        <title>The TEM-3 beta-lactamase, which hydrolyzes broad-spectrum cephalosporins, is derived from the TEM-2 penicillinase by two amino acid substitutions.</title>
        <authorList>
            <person name="Sougakoff W."/>
            <person name="Goussard S."/>
            <person name="Courvalin P."/>
        </authorList>
    </citation>
    <scope>NUCLEOTIDE SEQUENCE [GENOMIC DNA] (TEM-3)</scope>
</reference>
<reference key="6">
    <citation type="journal article" date="1992" name="Mol. Gen. Genet.">
        <title>A new example of physical linkage between Tn1 and Tn21: the antibiotic multiple-resistance region of plasmid pCFF04 encoding extended-spectrum beta-lactamase TEM-3.</title>
        <authorList>
            <person name="Mabilat C."/>
            <person name="Lourencao-Vital J."/>
            <person name="Goussard S."/>
            <person name="Courvalin P."/>
        </authorList>
    </citation>
    <scope>NUCLEOTIDE SEQUENCE [GENOMIC DNA] (TEM-3)</scope>
    <source>
        <plasmid>pCFF04</plasmid>
    </source>
</reference>
<reference key="7">
    <citation type="journal article" date="1989" name="Gene">
        <title>Characterization of the plasmid genes blaT-4 and blaT-5 which encode the broad-spectrum beta-lactamases TEM-4 and TEM-5 in enterobacteriaceae.</title>
        <authorList>
            <person name="Sougakoff W."/>
            <person name="Petit A."/>
            <person name="Goussard S."/>
            <person name="Sirot D."/>
            <person name="Bure A."/>
            <person name="Courvalin P."/>
        </authorList>
    </citation>
    <scope>NUCLEOTIDE SEQUENCE [GENOMIC DNA] (TEM-4 AND TEM-5)</scope>
    <source>
        <strain>CB86134</strain>
        <plasmid>pCFF04</plasmid>
        <plasmid>pUD16</plasmid>
    </source>
</reference>
<reference key="8">
    <citation type="journal article" date="1991" name="J. Gen. Microbiol.">
        <title>An IS1-like element is responsible for high-level synthesis of extended-spectrum beta-lactamase TEM-6 in Enterobacteriaceae.</title>
        <authorList>
            <person name="Goussard S."/>
            <person name="Sougakoff W."/>
            <person name="Mabilat C."/>
            <person name="Bauernfeind A."/>
            <person name="Courvalin P."/>
        </authorList>
    </citation>
    <scope>NUCLEOTIDE SEQUENCE [GENOMIC DNA] (TEM-6)</scope>
    <source>
        <strain>HB251</strain>
    </source>
</reference>
<reference key="9">
    <citation type="journal article" date="1992" name="Antimicrob. Agents Chemother.">
        <title>Nucleotide sequences of CAZ-2, CAZ-6, and CAZ-7 beta-lactamase genes.</title>
        <authorList>
            <person name="Chanal C."/>
            <person name="Poupart M.C."/>
            <person name="Sirot D."/>
            <person name="Labia R."/>
            <person name="Sirot J."/>
            <person name="Cluzel R."/>
        </authorList>
    </citation>
    <scope>NUCLEOTIDE SEQUENCE [GENOMIC DNA] (TEM-8; TEM-16 AND TEM-24)</scope>
</reference>
<reference key="10">
    <citation type="journal article" date="1994" name="FEMS Microbiol. Lett.">
        <title>Characterization and amino acid sequence of IRT-4, a novel TEM-type enzyme with a decreased susceptibility to beta-lactamase inhibitors.</title>
        <authorList>
            <person name="Brun T."/>
            <person name="Peduzzi J."/>
            <person name="Canica M.M."/>
            <person name="Paul G."/>
            <person name="Nevot P."/>
            <person name="Barthelemy M."/>
            <person name="Labia R."/>
        </authorList>
    </citation>
    <scope>PROTEIN SEQUENCE OF 24-286 (IRT-4)</scope>
    <source>
        <strain>PEY</strain>
    </source>
</reference>
<reference key="11">
    <citation type="journal article" date="1991" name="Biochem. J.">
        <title>A standard numbering scheme for the class A beta-lactamases.</title>
        <authorList>
            <person name="Ambler R.P."/>
            <person name="Coulson A.F."/>
            <person name="Frere J.M."/>
            <person name="Ghuysen J.M."/>
            <person name="Joris B."/>
            <person name="Forsman M."/>
            <person name="Levesque R.C."/>
            <person name="Tiraby G."/>
            <person name="Waley S.G."/>
        </authorList>
    </citation>
    <scope>AMINO ACID NUMBERING SCHEME</scope>
</reference>
<reference key="12">
    <citation type="journal article" date="1992" name="FEBS Lett.">
        <title>Beta-lactamase TEM1 of E. coli. Crystal structure determination at 2.5-A resolution.</title>
        <authorList>
            <person name="Jelsch C."/>
            <person name="Lenfant F."/>
            <person name="Masson J.-M."/>
            <person name="Samama J.-P."/>
        </authorList>
    </citation>
    <scope>X-RAY CRYSTALLOGRAPHY (2.5 ANGSTROMS) OF TEM-1</scope>
</reference>
<reference key="13">
    <citation type="journal article" date="1993" name="Proteins">
        <title>Crystal structure of Escherichia coli TEM1 beta-lactamase at 1.8-A resolution.</title>
        <authorList>
            <person name="Jelsch C."/>
            <person name="Mourey L."/>
            <person name="Masson J.-M."/>
            <person name="Samama J.-P."/>
        </authorList>
    </citation>
    <scope>X-RAY CRYSTALLOGRAPHY (1.8 ANGSTROMS) OF TEM-1</scope>
</reference>
<reference key="14">
    <citation type="journal article" date="1996" name="Nat. Struct. Biol.">
        <title>A potent new mode of beta-lactamase inhibition revealed by the 1.7 A X-ray crystallographic structure of the TEM-1-BLIP complex.</title>
        <authorList>
            <person name="Strynadka N.C.J."/>
            <person name="Jensen S.E."/>
            <person name="Alzari P.M."/>
            <person name="James M.N.G."/>
        </authorList>
    </citation>
    <scope>X-RAY CRYSTALLOGRAPHY (1.7 ANGSTROMS) OF TEM-1 COMPLEXED WITH BLIP</scope>
</reference>
<reference key="15">
    <citation type="journal article" date="1998" name="Biochemistry">
        <title>Crystal structure of an acylation transition-state analog of the TEM-1 beta-lactamase. Mechanistic implications for class A beta-lactamases.</title>
        <authorList>
            <person name="Maveyraud L."/>
            <person name="Pratt R.F."/>
            <person name="Samama J.-P."/>
        </authorList>
    </citation>
    <scope>X-RAY CRYSTALLOGRAPHY (2.0 ANGSTROMS) OF TEM-1</scope>
</reference>
<reference key="16">
    <citation type="journal article" date="1999" name="Biochemistry">
        <title>X-ray structure of the Asn276Asp variant of the Escherichia coli TEM-1 beta-lactamase: direct observation of electrostatic modulation in resistance to inactivation by clavulanic acid.</title>
        <authorList>
            <person name="Swaren P."/>
            <person name="Golemi D."/>
            <person name="Cabantous S."/>
            <person name="Bulychev A."/>
            <person name="Maveyraud L."/>
            <person name="Mobashery S."/>
            <person name="Samama J.-P."/>
        </authorList>
    </citation>
    <scope>X-RAY CRYSTALLOGRAPHY (2.28 ANGSTROMS) OF TEM-1</scope>
</reference>
<geneLocation type="plasmid">
    <name>R1</name>
    <name>R7268</name>
</geneLocation>
<geneLocation type="plasmid">
    <name>IncFII R100</name>
    <name>NR1</name>
</geneLocation>
<geneLocation type="plasmid">
    <name>R6K</name>
</geneLocation>
<geneLocation type="plasmid">
    <name>pUD16</name>
</geneLocation>
<geneLocation type="plasmid">
    <name>pCFF04</name>
</geneLocation>
<geneLocation type="plasmid">
    <name>pCFF14</name>
</geneLocation>
<comment type="function">
    <text>TEM-type are the most prevalent beta-lactamases in enterobacteria; they hydrolyze the beta-lactam bond in susceptible beta-lactam antibiotics, thus conferring resistance to penicillins and cephalosporins. TEM-3 and TEM-4 are capable of hydrolyzing cefotaxime and ceftazidime. TEM-5 is capable of hydrolyzing ceftazidime. TEM-6 is capable of hydrolyzing ceftazidime and aztreonam. TEM-8/CAZ-2, TEM-16/CAZ-7 and TEM-24/CAZ-6 are markedly active against ceftazidime. IRT-4 shows resistance to beta-lactamase inhibitors.</text>
</comment>
<comment type="catalytic activity">
    <reaction evidence="1">
        <text>a beta-lactam + H2O = a substituted beta-amino acid</text>
        <dbReference type="Rhea" id="RHEA:20401"/>
        <dbReference type="ChEBI" id="CHEBI:15377"/>
        <dbReference type="ChEBI" id="CHEBI:35627"/>
        <dbReference type="ChEBI" id="CHEBI:140347"/>
        <dbReference type="EC" id="3.5.2.6"/>
    </reaction>
</comment>
<comment type="interaction">
    <interactant intactId="EBI-1031989">
        <id>P62593</id>
    </interactant>
    <interactant intactId="EBI-1031985">
        <id>P35804</id>
    </interactant>
    <organismsDiffer>true</organismsDiffer>
    <experiments>2</experiments>
</comment>
<comment type="biotechnology">
    <text>This protein is used as a marker in many commonly used cloning vectors, such as pBR322 and the pUC series.</text>
</comment>
<comment type="miscellaneous">
    <text>The beta-lactamase present on pBR322 was cloned from plasmid R1 (R7268).</text>
</comment>
<comment type="miscellaneous">
    <text evidence="5">The class A beta-lactamase family has a specific amino-acid numbering system, sometimes called Ambler or ABL numbering and often misspelt as Amber. A multiple sequence alignment was used to derive a consensus sequence and then the consensus was numbered taking into account insertions and deletions. This allows use of identical numbers, e.g. for active site residues, despite differences in protein length. UniProt always uses natural numbering of residues, hence there appear to be differences in numbering between this entry and some papers.</text>
</comment>
<comment type="similarity">
    <text evidence="4">Belongs to the class-A beta-lactamase family.</text>
</comment>
<dbReference type="EC" id="3.5.2.6"/>
<dbReference type="EMBL" id="J01749">
    <property type="protein sequence ID" value="AAB59737.1"/>
    <property type="molecule type" value="Genomic_DNA"/>
</dbReference>
<dbReference type="EMBL" id="V00613">
    <property type="protein sequence ID" value="CAA23886.1"/>
    <property type="molecule type" value="Genomic_DNA"/>
</dbReference>
<dbReference type="EMBL" id="X64523">
    <property type="protein sequence ID" value="CAA45828.1"/>
    <property type="molecule type" value="Genomic_DNA"/>
</dbReference>
<dbReference type="EMBL" id="X57972">
    <property type="protein sequence ID" value="CAA41038.1"/>
    <property type="molecule type" value="Genomic_DNA"/>
</dbReference>
<dbReference type="EMBL" id="X65252">
    <property type="protein sequence ID" value="CAA46344.1"/>
    <property type="molecule type" value="Genomic_DNA"/>
</dbReference>
<dbReference type="EMBL" id="X65253">
    <property type="protein sequence ID" value="CAA46345.1"/>
    <property type="molecule type" value="Genomic_DNA"/>
</dbReference>
<dbReference type="EMBL" id="X65254">
    <property type="protein sequence ID" value="CAA46346.1"/>
    <property type="molecule type" value="Genomic_DNA"/>
</dbReference>
<dbReference type="EMBL" id="U89928">
    <property type="protein sequence ID" value="AAB64386.1"/>
    <property type="molecule type" value="Genomic_DNA"/>
</dbReference>
<dbReference type="EMBL" id="U66885">
    <property type="protein sequence ID" value="AAC48875.1"/>
    <property type="molecule type" value="Genomic_DNA"/>
</dbReference>
<dbReference type="PIR" id="A93821">
    <property type="entry name" value="PNECP"/>
</dbReference>
<dbReference type="PIR" id="S30113">
    <property type="entry name" value="S30113"/>
</dbReference>
<dbReference type="RefSeq" id="NP_943295.1">
    <property type="nucleotide sequence ID" value="NC_005248.1"/>
</dbReference>
<dbReference type="RefSeq" id="NP_957565.1">
    <property type="nucleotide sequence ID" value="NC_005327.1"/>
</dbReference>
<dbReference type="RefSeq" id="YP_001096393.1">
    <property type="nucleotide sequence ID" value="NC_009132.1"/>
</dbReference>
<dbReference type="RefSeq" id="YP_001693174.1">
    <property type="nucleotide sequence ID" value="NC_010378.1"/>
</dbReference>
<dbReference type="RefSeq" id="YP_001816609.1">
    <property type="nucleotide sequence ID" value="NC_010558.1"/>
</dbReference>
<dbReference type="RefSeq" id="YP_003108102.1">
    <property type="nucleotide sequence ID" value="NC_013120.1"/>
</dbReference>
<dbReference type="RefSeq" id="YP_003108210.1">
    <property type="nucleotide sequence ID" value="NC_013121.1"/>
</dbReference>
<dbReference type="RefSeq" id="YP_003829069.1">
    <property type="nucleotide sequence ID" value="NC_014383.1"/>
</dbReference>
<dbReference type="RefSeq" id="YP_003829170.1">
    <property type="nucleotide sequence ID" value="NC_014384.1"/>
</dbReference>
<dbReference type="RefSeq" id="YP_004119720.1">
    <property type="nucleotide sequence ID" value="NC_014843.1"/>
</dbReference>
<dbReference type="RefSeq" id="YP_004119734.1">
    <property type="nucleotide sequence ID" value="NC_014843.1"/>
</dbReference>
<dbReference type="RefSeq" id="YP_006903139.1">
    <property type="nucleotide sequence ID" value="NC_019047.1"/>
</dbReference>
<dbReference type="RefSeq" id="YP_006939984.1">
    <property type="nucleotide sequence ID" value="NC_018994.1"/>
</dbReference>
<dbReference type="RefSeq" id="YP_006940092.1">
    <property type="nucleotide sequence ID" value="NC_018995.1"/>
</dbReference>
<dbReference type="RefSeq" id="YP_006952181.1">
    <property type="nucleotide sequence ID" value="NC_019056.1"/>
</dbReference>
<dbReference type="RefSeq" id="YP_006952421.1">
    <property type="nucleotide sequence ID" value="NC_019062.1"/>
</dbReference>
<dbReference type="RefSeq" id="YP_006952427.1">
    <property type="nucleotide sequence ID" value="NC_019063.1"/>
</dbReference>
<dbReference type="RefSeq" id="YP_006953479.1">
    <property type="nucleotide sequence ID" value="NC_019073.1"/>
</dbReference>
<dbReference type="RefSeq" id="YP_006953762.1">
    <property type="nucleotide sequence ID" value="NC_019088.1"/>
</dbReference>
<dbReference type="RefSeq" id="YP_006953988.1">
    <property type="nucleotide sequence ID" value="NC_019091.1"/>
</dbReference>
<dbReference type="RefSeq" id="YP_006954235.1">
    <property type="nucleotide sequence ID" value="NC_019095.1"/>
</dbReference>
<dbReference type="RefSeq" id="YP_007447512.1">
    <property type="nucleotide sequence ID" value="NC_020278.2"/>
</dbReference>
<dbReference type="RefSeq" id="YP_008864019.1">
    <property type="nucleotide sequence ID" value="NC_022992.1"/>
</dbReference>
<dbReference type="RefSeq" id="YP_008864686.1">
    <property type="nucleotide sequence ID" value="NC_022996.1"/>
</dbReference>
<dbReference type="RefSeq" id="YP_008995211.1">
    <property type="nucleotide sequence ID" value="NC_023277.2"/>
</dbReference>
<dbReference type="RefSeq" id="YP_009060387.1">
    <property type="nucleotide sequence ID" value="NC_024960.1"/>
</dbReference>
<dbReference type="RefSeq" id="YP_009060444.1">
    <property type="nucleotide sequence ID" value="NC_024961.1"/>
</dbReference>
<dbReference type="RefSeq" id="YP_009060580.1">
    <property type="nucleotide sequence ID" value="NC_024967.1"/>
</dbReference>
<dbReference type="RefSeq" id="YP_009061316.1">
    <property type="nucleotide sequence ID" value="NC_024977.1"/>
</dbReference>
<dbReference type="RefSeq" id="YP_009066523.1">
    <property type="nucleotide sequence ID" value="NC_025106.1"/>
</dbReference>
<dbReference type="RefSeq" id="YP_009068284.1">
    <property type="nucleotide sequence ID" value="NC_025139.1"/>
</dbReference>
<dbReference type="RefSeq" id="YP_009068507.1">
    <property type="nucleotide sequence ID" value="NC_025141.1"/>
</dbReference>
<dbReference type="RefSeq" id="YP_009070232.1">
    <property type="nucleotide sequence ID" value="NC_025167.1"/>
</dbReference>
<dbReference type="RefSeq" id="YP_009070558.1">
    <property type="nucleotide sequence ID" value="NC_025175.1"/>
</dbReference>
<dbReference type="RefSeq" id="YP_009071512.1">
    <property type="nucleotide sequence ID" value="NC_025183.1"/>
</dbReference>
<dbReference type="RefSeq" id="YP_190222.1">
    <property type="nucleotide sequence ID" value="NC_006671.1"/>
</dbReference>
<dbReference type="PDB" id="1AXB">
    <property type="method" value="X-ray"/>
    <property type="resolution" value="2.00 A"/>
    <property type="chains" value="A=24-286"/>
</dbReference>
<dbReference type="PDB" id="1BT5">
    <property type="method" value="X-ray"/>
    <property type="resolution" value="1.80 A"/>
    <property type="chains" value="A=24-286"/>
</dbReference>
<dbReference type="PDB" id="1BTL">
    <property type="method" value="X-ray"/>
    <property type="resolution" value="1.80 A"/>
    <property type="chains" value="A=24-286"/>
</dbReference>
<dbReference type="PDB" id="1CK3">
    <property type="method" value="X-ray"/>
    <property type="resolution" value="2.28 A"/>
    <property type="chains" value="A=24-284"/>
</dbReference>
<dbReference type="PDB" id="1ERM">
    <property type="method" value="X-ray"/>
    <property type="resolution" value="1.70 A"/>
    <property type="chains" value="A=24-286"/>
</dbReference>
<dbReference type="PDB" id="1ERO">
    <property type="method" value="X-ray"/>
    <property type="resolution" value="2.10 A"/>
    <property type="chains" value="A=24-286"/>
</dbReference>
<dbReference type="PDB" id="1ERQ">
    <property type="method" value="X-ray"/>
    <property type="resolution" value="1.90 A"/>
    <property type="chains" value="A=24-286"/>
</dbReference>
<dbReference type="PDB" id="1ESU">
    <property type="method" value="X-ray"/>
    <property type="resolution" value="2.00 A"/>
    <property type="chains" value="A=24-284"/>
</dbReference>
<dbReference type="PDB" id="1FQG">
    <property type="method" value="X-ray"/>
    <property type="resolution" value="1.70 A"/>
    <property type="chains" value="A=24-286"/>
</dbReference>
<dbReference type="PDB" id="1JTD">
    <property type="method" value="X-ray"/>
    <property type="resolution" value="2.30 A"/>
    <property type="chains" value="A=24-286"/>
</dbReference>
<dbReference type="PDB" id="1JTG">
    <property type="method" value="X-ray"/>
    <property type="resolution" value="1.73 A"/>
    <property type="chains" value="A/C=24-286"/>
</dbReference>
<dbReference type="PDB" id="1JVJ">
    <property type="method" value="X-ray"/>
    <property type="resolution" value="1.73 A"/>
    <property type="chains" value="A=24-286"/>
</dbReference>
<dbReference type="PDB" id="1JWP">
    <property type="method" value="X-ray"/>
    <property type="resolution" value="1.75 A"/>
    <property type="chains" value="A=24-286"/>
</dbReference>
<dbReference type="PDB" id="1JWV">
    <property type="method" value="X-ray"/>
    <property type="resolution" value="1.85 A"/>
    <property type="chains" value="A=24-286"/>
</dbReference>
<dbReference type="PDB" id="1JWZ">
    <property type="method" value="X-ray"/>
    <property type="resolution" value="1.80 A"/>
    <property type="chains" value="A=24-286"/>
</dbReference>
<dbReference type="PDB" id="1LHY">
    <property type="method" value="X-ray"/>
    <property type="resolution" value="2.00 A"/>
    <property type="chains" value="A=24-284"/>
</dbReference>
<dbReference type="PDB" id="1LI0">
    <property type="method" value="X-ray"/>
    <property type="resolution" value="1.61 A"/>
    <property type="chains" value="A=24-284"/>
</dbReference>
<dbReference type="PDB" id="1LI9">
    <property type="method" value="X-ray"/>
    <property type="resolution" value="1.52 A"/>
    <property type="chains" value="A=24-284"/>
</dbReference>
<dbReference type="PDB" id="1M40">
    <property type="method" value="X-ray"/>
    <property type="resolution" value="0.85 A"/>
    <property type="chains" value="A=24-286"/>
</dbReference>
<dbReference type="PDB" id="1NXY">
    <property type="method" value="X-ray"/>
    <property type="resolution" value="1.60 A"/>
    <property type="chains" value="A=24-286"/>
</dbReference>
<dbReference type="PDB" id="1NY0">
    <property type="method" value="X-ray"/>
    <property type="resolution" value="1.75 A"/>
    <property type="chains" value="A=24-286"/>
</dbReference>
<dbReference type="PDB" id="1NYM">
    <property type="method" value="X-ray"/>
    <property type="resolution" value="1.20 A"/>
    <property type="chains" value="A=24-286"/>
</dbReference>
<dbReference type="PDB" id="1NYY">
    <property type="method" value="X-ray"/>
    <property type="resolution" value="1.90 A"/>
    <property type="chains" value="A=24-286"/>
</dbReference>
<dbReference type="PDB" id="1PZO">
    <property type="method" value="X-ray"/>
    <property type="resolution" value="1.90 A"/>
    <property type="chains" value="A=24-284"/>
</dbReference>
<dbReference type="PDB" id="1PZP">
    <property type="method" value="X-ray"/>
    <property type="resolution" value="1.45 A"/>
    <property type="chains" value="A=24-284"/>
</dbReference>
<dbReference type="PDB" id="1S0W">
    <property type="method" value="X-ray"/>
    <property type="resolution" value="2.30 A"/>
    <property type="chains" value="A/B=24-286"/>
</dbReference>
<dbReference type="PDB" id="1TEM">
    <property type="method" value="X-ray"/>
    <property type="resolution" value="1.95 A"/>
    <property type="chains" value="A=24-286"/>
</dbReference>
<dbReference type="PDB" id="1XPB">
    <property type="method" value="X-ray"/>
    <property type="resolution" value="1.90 A"/>
    <property type="chains" value="A=24-286"/>
</dbReference>
<dbReference type="PDB" id="1XXM">
    <property type="method" value="X-ray"/>
    <property type="resolution" value="1.90 A"/>
    <property type="chains" value="A/B=24-286"/>
</dbReference>
<dbReference type="PDB" id="1YT4">
    <property type="method" value="X-ray"/>
    <property type="resolution" value="1.40 A"/>
    <property type="chains" value="A=24-284"/>
</dbReference>
<dbReference type="PDB" id="1ZG4">
    <property type="method" value="X-ray"/>
    <property type="resolution" value="1.55 A"/>
    <property type="chains" value="A=1-284"/>
</dbReference>
<dbReference type="PDB" id="1ZG6">
    <property type="method" value="X-ray"/>
    <property type="resolution" value="2.10 A"/>
    <property type="chains" value="A=1-284"/>
</dbReference>
<dbReference type="PDB" id="2B5R">
    <property type="method" value="X-ray"/>
    <property type="resolution" value="1.65 A"/>
    <property type="chains" value="A/B=24-286"/>
</dbReference>
<dbReference type="PDB" id="2V1Z">
    <property type="method" value="X-ray"/>
    <property type="resolution" value="1.60 A"/>
    <property type="chains" value="A=25-38, A=41-286"/>
</dbReference>
<dbReference type="PDB" id="2V20">
    <property type="method" value="X-ray"/>
    <property type="resolution" value="1.67 A"/>
    <property type="chains" value="A=25-38, A=41-286"/>
</dbReference>
<dbReference type="PDB" id="3C7U">
    <property type="method" value="X-ray"/>
    <property type="resolution" value="2.20 A"/>
    <property type="chains" value="A/C=24-286"/>
</dbReference>
<dbReference type="PDB" id="3C7V">
    <property type="method" value="X-ray"/>
    <property type="resolution" value="2.07 A"/>
    <property type="chains" value="A/C=24-286"/>
</dbReference>
<dbReference type="PDB" id="3CMZ">
    <property type="method" value="X-ray"/>
    <property type="resolution" value="1.92 A"/>
    <property type="chains" value="A=24-286"/>
</dbReference>
<dbReference type="PDB" id="3DTM">
    <property type="method" value="X-ray"/>
    <property type="resolution" value="2.00 A"/>
    <property type="chains" value="A=24-286"/>
</dbReference>
<dbReference type="PDB" id="3JYI">
    <property type="method" value="X-ray"/>
    <property type="resolution" value="2.70 A"/>
    <property type="chains" value="A/B/C/D/E/F=24-286"/>
</dbReference>
<dbReference type="PDB" id="3TOI">
    <property type="method" value="X-ray"/>
    <property type="resolution" value="1.90 A"/>
    <property type="chains" value="A/B=39-283"/>
</dbReference>
<dbReference type="PDB" id="4DXB">
    <property type="method" value="X-ray"/>
    <property type="resolution" value="2.29 A"/>
    <property type="chains" value="A/B=24-226"/>
</dbReference>
<dbReference type="PDB" id="4DXC">
    <property type="method" value="X-ray"/>
    <property type="resolution" value="2.30 A"/>
    <property type="chains" value="A=24-226"/>
</dbReference>
<dbReference type="PDB" id="4GKU">
    <property type="method" value="X-ray"/>
    <property type="resolution" value="1.92 A"/>
    <property type="chains" value="A=24-286"/>
</dbReference>
<dbReference type="PDB" id="4IBR">
    <property type="method" value="X-ray"/>
    <property type="resolution" value="2.20 A"/>
    <property type="chains" value="A=24-286"/>
</dbReference>
<dbReference type="PDB" id="4IBX">
    <property type="method" value="X-ray"/>
    <property type="resolution" value="2.68 A"/>
    <property type="chains" value="A/B/C/D/E=24-286"/>
</dbReference>
<dbReference type="PDB" id="4ID4">
    <property type="method" value="X-ray"/>
    <property type="resolution" value="1.05 A"/>
    <property type="chains" value="A=24-147, A=189-286"/>
</dbReference>
<dbReference type="PDB" id="4MEZ">
    <property type="method" value="X-ray"/>
    <property type="resolution" value="2.05 A"/>
    <property type="chains" value="A/B=24-286"/>
</dbReference>
<dbReference type="PDB" id="4QY5">
    <property type="method" value="X-ray"/>
    <property type="resolution" value="1.50 A"/>
    <property type="chains" value="A=24-147, A=189-286"/>
</dbReference>
<dbReference type="PDB" id="4QY6">
    <property type="method" value="X-ray"/>
    <property type="resolution" value="1.15 A"/>
    <property type="chains" value="A=24-147, A=189-286"/>
</dbReference>
<dbReference type="PDB" id="4R4R">
    <property type="method" value="X-ray"/>
    <property type="resolution" value="1.20 A"/>
    <property type="chains" value="A=24-147, A=189-286"/>
</dbReference>
<dbReference type="PDB" id="4R4S">
    <property type="method" value="X-ray"/>
    <property type="resolution" value="1.10 A"/>
    <property type="chains" value="A=24-149, A=189-286"/>
</dbReference>
<dbReference type="PDB" id="4RVA">
    <property type="method" value="X-ray"/>
    <property type="resolution" value="1.44 A"/>
    <property type="chains" value="A=24-286"/>
</dbReference>
<dbReference type="PDB" id="4RX2">
    <property type="method" value="X-ray"/>
    <property type="resolution" value="2.31 A"/>
    <property type="chains" value="A/B/C/D/E/F/G/H=24-286"/>
</dbReference>
<dbReference type="PDB" id="4RX3">
    <property type="method" value="X-ray"/>
    <property type="resolution" value="1.39 A"/>
    <property type="chains" value="A=24-286"/>
</dbReference>
<dbReference type="PDB" id="4ZJ1">
    <property type="method" value="X-ray"/>
    <property type="resolution" value="1.54 A"/>
    <property type="chains" value="A=1-286"/>
</dbReference>
<dbReference type="PDB" id="4ZJ2">
    <property type="method" value="X-ray"/>
    <property type="resolution" value="1.80 A"/>
    <property type="chains" value="A=1-286"/>
</dbReference>
<dbReference type="PDB" id="4ZJ3">
    <property type="method" value="X-ray"/>
    <property type="resolution" value="1.70 A"/>
    <property type="chains" value="A=1-286"/>
</dbReference>
<dbReference type="PDB" id="5HVI">
    <property type="method" value="X-ray"/>
    <property type="resolution" value="1.64 A"/>
    <property type="chains" value="A/B/C/D=24-286"/>
</dbReference>
<dbReference type="PDB" id="5HW1">
    <property type="method" value="X-ray"/>
    <property type="resolution" value="1.70 A"/>
    <property type="chains" value="A/B/C/D=24-286"/>
</dbReference>
<dbReference type="PDB" id="5HW5">
    <property type="method" value="X-ray"/>
    <property type="resolution" value="1.41 A"/>
    <property type="chains" value="A/B/C/D=24-286"/>
</dbReference>
<dbReference type="PDB" id="5I52">
    <property type="method" value="X-ray"/>
    <property type="resolution" value="1.75 A"/>
    <property type="chains" value="A/B/C/D=24-286"/>
</dbReference>
<dbReference type="PDB" id="5I63">
    <property type="method" value="X-ray"/>
    <property type="resolution" value="1.95 A"/>
    <property type="chains" value="A/B/C/D=24-286"/>
</dbReference>
<dbReference type="PDB" id="5IQ8">
    <property type="method" value="X-ray"/>
    <property type="resolution" value="2.06 A"/>
    <property type="chains" value="A/B/C/D=24-286"/>
</dbReference>
<dbReference type="PDB" id="5KKF">
    <property type="method" value="X-ray"/>
    <property type="resolution" value="1.82 A"/>
    <property type="chains" value="A/B/C/D=24-286"/>
</dbReference>
<dbReference type="PDB" id="5KPU">
    <property type="method" value="X-ray"/>
    <property type="resolution" value="1.50 A"/>
    <property type="chains" value="A/B/C/D=24-286"/>
</dbReference>
<dbReference type="PDB" id="5NPO">
    <property type="method" value="X-ray"/>
    <property type="resolution" value="1.95 A"/>
    <property type="chains" value="A=24-286"/>
</dbReference>
<dbReference type="PDB" id="6APA">
    <property type="method" value="X-ray"/>
    <property type="resolution" value="1.86 A"/>
    <property type="chains" value="A/B/C/D=24-286"/>
</dbReference>
<dbReference type="PDB" id="6AYK">
    <property type="method" value="X-ray"/>
    <property type="resolution" value="1.44 A"/>
    <property type="chains" value="A/B/C/D=24-286"/>
</dbReference>
<dbReference type="PDB" id="6B2N">
    <property type="method" value="X-ray"/>
    <property type="resolution" value="2.00 A"/>
    <property type="chains" value="A/B/C/D=24-286"/>
</dbReference>
<dbReference type="PDB" id="7QLP">
    <property type="method" value="X-ray"/>
    <property type="resolution" value="2.30 A"/>
    <property type="chains" value="A/B/C/D/E/F=24-286"/>
</dbReference>
<dbReference type="PDB" id="7QNK">
    <property type="method" value="X-ray"/>
    <property type="resolution" value="2.50 A"/>
    <property type="chains" value="A/B/C/D/E/F=24-286"/>
</dbReference>
<dbReference type="PDB" id="7QOR">
    <property type="method" value="X-ray"/>
    <property type="resolution" value="2.00 A"/>
    <property type="chains" value="AAA/BBB/CCC/DDD/EEE/FFF=24-286"/>
</dbReference>
<dbReference type="PDB" id="8DDZ">
    <property type="method" value="X-ray"/>
    <property type="resolution" value="1.45 A"/>
    <property type="chains" value="A/B/C/D=24-286"/>
</dbReference>
<dbReference type="PDB" id="8DE0">
    <property type="method" value="X-ray"/>
    <property type="resolution" value="1.72 A"/>
    <property type="chains" value="A/B/C/D=24-286"/>
</dbReference>
<dbReference type="PDB" id="8DE1">
    <property type="method" value="X-ray"/>
    <property type="resolution" value="1.56 A"/>
    <property type="chains" value="A/B/C/D=24-286"/>
</dbReference>
<dbReference type="PDB" id="8DE2">
    <property type="method" value="X-ray"/>
    <property type="resolution" value="2.45 A"/>
    <property type="chains" value="A/B/C/D=24-286"/>
</dbReference>
<dbReference type="PDBsum" id="1AXB"/>
<dbReference type="PDBsum" id="1BT5"/>
<dbReference type="PDBsum" id="1BTL"/>
<dbReference type="PDBsum" id="1CK3"/>
<dbReference type="PDBsum" id="1ERM"/>
<dbReference type="PDBsum" id="1ERO"/>
<dbReference type="PDBsum" id="1ERQ"/>
<dbReference type="PDBsum" id="1ESU"/>
<dbReference type="PDBsum" id="1FQG"/>
<dbReference type="PDBsum" id="1JTD"/>
<dbReference type="PDBsum" id="1JTG"/>
<dbReference type="PDBsum" id="1JVJ"/>
<dbReference type="PDBsum" id="1JWP"/>
<dbReference type="PDBsum" id="1JWV"/>
<dbReference type="PDBsum" id="1JWZ"/>
<dbReference type="PDBsum" id="1LHY"/>
<dbReference type="PDBsum" id="1LI0"/>
<dbReference type="PDBsum" id="1LI9"/>
<dbReference type="PDBsum" id="1M40"/>
<dbReference type="PDBsum" id="1NXY"/>
<dbReference type="PDBsum" id="1NY0"/>
<dbReference type="PDBsum" id="1NYM"/>
<dbReference type="PDBsum" id="1NYY"/>
<dbReference type="PDBsum" id="1PZO"/>
<dbReference type="PDBsum" id="1PZP"/>
<dbReference type="PDBsum" id="1S0W"/>
<dbReference type="PDBsum" id="1TEM"/>
<dbReference type="PDBsum" id="1XPB"/>
<dbReference type="PDBsum" id="1XXM"/>
<dbReference type="PDBsum" id="1YT4"/>
<dbReference type="PDBsum" id="1ZG4"/>
<dbReference type="PDBsum" id="1ZG6"/>
<dbReference type="PDBsum" id="2B5R"/>
<dbReference type="PDBsum" id="2V1Z"/>
<dbReference type="PDBsum" id="2V20"/>
<dbReference type="PDBsum" id="3C7U"/>
<dbReference type="PDBsum" id="3C7V"/>
<dbReference type="PDBsum" id="3CMZ"/>
<dbReference type="PDBsum" id="3DTM"/>
<dbReference type="PDBsum" id="3JYI"/>
<dbReference type="PDBsum" id="3TOI"/>
<dbReference type="PDBsum" id="4DXB"/>
<dbReference type="PDBsum" id="4DXC"/>
<dbReference type="PDBsum" id="4GKU"/>
<dbReference type="PDBsum" id="4IBR"/>
<dbReference type="PDBsum" id="4IBX"/>
<dbReference type="PDBsum" id="4ID4"/>
<dbReference type="PDBsum" id="4MEZ"/>
<dbReference type="PDBsum" id="4QY5"/>
<dbReference type="PDBsum" id="4QY6"/>
<dbReference type="PDBsum" id="4R4R"/>
<dbReference type="PDBsum" id="4R4S"/>
<dbReference type="PDBsum" id="4RVA"/>
<dbReference type="PDBsum" id="4RX2"/>
<dbReference type="PDBsum" id="4RX3"/>
<dbReference type="PDBsum" id="4ZJ1"/>
<dbReference type="PDBsum" id="4ZJ2"/>
<dbReference type="PDBsum" id="4ZJ3"/>
<dbReference type="PDBsum" id="5HVI"/>
<dbReference type="PDBsum" id="5HW1"/>
<dbReference type="PDBsum" id="5HW5"/>
<dbReference type="PDBsum" id="5I52"/>
<dbReference type="PDBsum" id="5I63"/>
<dbReference type="PDBsum" id="5IQ8"/>
<dbReference type="PDBsum" id="5KKF"/>
<dbReference type="PDBsum" id="5KPU"/>
<dbReference type="PDBsum" id="5NPO"/>
<dbReference type="PDBsum" id="6APA"/>
<dbReference type="PDBsum" id="6AYK"/>
<dbReference type="PDBsum" id="6B2N"/>
<dbReference type="PDBsum" id="7QLP"/>
<dbReference type="PDBsum" id="7QNK"/>
<dbReference type="PDBsum" id="7QOR"/>
<dbReference type="PDBsum" id="8DDZ"/>
<dbReference type="PDBsum" id="8DE0"/>
<dbReference type="PDBsum" id="8DE1"/>
<dbReference type="PDBsum" id="8DE2"/>
<dbReference type="BMRB" id="P62593"/>
<dbReference type="SMR" id="P62593"/>
<dbReference type="IntAct" id="P62593">
    <property type="interactions" value="1"/>
</dbReference>
<dbReference type="BindingDB" id="P62593"/>
<dbReference type="ChEMBL" id="CHEMBL2065"/>
<dbReference type="ChEMBL" id="CHEMBL2364670"/>
<dbReference type="DrugBank" id="DB07466">
    <property type="generic name" value="(1R)-2-PHENYLACETAMIDO-2-(3-CARBOXYPHENYL)ETHYL BORONIC ACID"/>
</dbReference>
<dbReference type="DrugBank" id="DB07464">
    <property type="generic name" value="1(R)-1-ACETAMIDO-2-(3-CARBOXY-2-HYDROXYPHENYL)ETHYL BORONIC ACID"/>
</dbReference>
<dbReference type="DrugBank" id="DB02614">
    <property type="generic name" value="1(R)-1-Acetamido-2-(3-Carboxyphenyl)Ethyl Boronic Acid"/>
</dbReference>
<dbReference type="DrugBank" id="DB04430">
    <property type="generic name" value="3-(4-Phenylamino-Phenylamino)-2-(1h-Tetrazol-5-Yl)-Acrylonitrile"/>
</dbReference>
<dbReference type="DrugBank" id="DB08551">
    <property type="generic name" value="3-{(R)-(Dihydroxyboryl)[(2-thienylacetyl)amino]methyl}benzoic acid"/>
</dbReference>
<dbReference type="DrugBank" id="DB07599">
    <property type="generic name" value="[(2-AMINO-ALPHA-METHOXYIMINO-4-THIAZOLYLACETYL)AMINO]METHYLBORONIC ACID"/>
</dbReference>
<dbReference type="DrugBank" id="DB02841">
    <property type="generic name" value="[(2-Ethoxy-1-Naphthoyl)Amino]Methylboronic Acid"/>
</dbReference>
<dbReference type="DrugBank" id="DB02642">
    <property type="generic name" value="[[N-(Benzyloxycarbonyl)Amino]Methyl]Phosphate"/>
</dbReference>
<dbReference type="DrugBank" id="DB09060">
    <property type="generic name" value="Avibactam"/>
</dbReference>
<dbReference type="DrugBank" id="DB01053">
    <property type="generic name" value="Benzylpenicillin"/>
</dbReference>
<dbReference type="DrugBank" id="DB04035">
    <property type="generic name" value="Ceftazidime BATSI"/>
</dbReference>
<dbReference type="DrugBank" id="DB01598">
    <property type="generic name" value="Imipenem"/>
</dbReference>
<dbReference type="DrugBank" id="DB04037">
    <property type="generic name" value="N,N-Bis(4-Chlorobenzyl)-1h-1,2,3,4-Tetraazol-5-Amine"/>
</dbReference>
<dbReference type="DrugBank" id="DB12377">
    <property type="generic name" value="Relebactam"/>
</dbReference>
<dbReference type="DrugBank" id="DB12107">
    <property type="generic name" value="Vaborbactam"/>
</dbReference>
<dbReference type="DrugCentral" id="P62593"/>
<dbReference type="ABCD" id="P62593">
    <property type="antibodies" value="7 sequenced antibodies"/>
</dbReference>
<dbReference type="KEGG" id="ag:AAB59737"/>
<dbReference type="KEGG" id="ag:CAA41038"/>
<dbReference type="KEGG" id="ag:CAA45828"/>
<dbReference type="KEGG" id="ag:CAA46344"/>
<dbReference type="KEGG" id="ag:CAA46345"/>
<dbReference type="KEGG" id="ag:CAA46346"/>
<dbReference type="OMA" id="EWMKGNA"/>
<dbReference type="BRENDA" id="3.5.2.6">
    <property type="organism ID" value="2026"/>
</dbReference>
<dbReference type="SABIO-RK" id="P62593"/>
<dbReference type="EvolutionaryTrace" id="P62593"/>
<dbReference type="PRO" id="PR:P62593"/>
<dbReference type="GO" id="GO:0008800">
    <property type="term" value="F:beta-lactamase activity"/>
    <property type="evidence" value="ECO:0007669"/>
    <property type="project" value="UniProtKB-EC"/>
</dbReference>
<dbReference type="GO" id="GO:0030655">
    <property type="term" value="P:beta-lactam antibiotic catabolic process"/>
    <property type="evidence" value="ECO:0007669"/>
    <property type="project" value="InterPro"/>
</dbReference>
<dbReference type="GO" id="GO:0046677">
    <property type="term" value="P:response to antibiotic"/>
    <property type="evidence" value="ECO:0007669"/>
    <property type="project" value="UniProtKB-KW"/>
</dbReference>
<dbReference type="Gene3D" id="3.40.710.10">
    <property type="entry name" value="DD-peptidase/beta-lactamase superfamily"/>
    <property type="match status" value="1"/>
</dbReference>
<dbReference type="InterPro" id="IPR012338">
    <property type="entry name" value="Beta-lactam/transpept-like"/>
</dbReference>
<dbReference type="InterPro" id="IPR045155">
    <property type="entry name" value="Beta-lactam_cat"/>
</dbReference>
<dbReference type="InterPro" id="IPR000871">
    <property type="entry name" value="Beta-lactam_class-A"/>
</dbReference>
<dbReference type="InterPro" id="IPR023650">
    <property type="entry name" value="Beta-lactam_class-A_AS"/>
</dbReference>
<dbReference type="NCBIfam" id="NF033103">
    <property type="entry name" value="bla_class_A"/>
    <property type="match status" value="1"/>
</dbReference>
<dbReference type="NCBIfam" id="NF000531">
    <property type="entry name" value="blaTEM"/>
    <property type="match status" value="1"/>
</dbReference>
<dbReference type="PANTHER" id="PTHR35333">
    <property type="entry name" value="BETA-LACTAMASE"/>
    <property type="match status" value="1"/>
</dbReference>
<dbReference type="PANTHER" id="PTHR35333:SF3">
    <property type="entry name" value="BETA-LACTAMASE-TYPE TRANSPEPTIDASE FOLD CONTAINING PROTEIN"/>
    <property type="match status" value="1"/>
</dbReference>
<dbReference type="Pfam" id="PF13354">
    <property type="entry name" value="Beta-lactamase2"/>
    <property type="match status" value="1"/>
</dbReference>
<dbReference type="PRINTS" id="PR00118">
    <property type="entry name" value="BLACTAMASEA"/>
</dbReference>
<dbReference type="SUPFAM" id="SSF56601">
    <property type="entry name" value="beta-lactamase/transpeptidase-like"/>
    <property type="match status" value="1"/>
</dbReference>
<dbReference type="PROSITE" id="PS00146">
    <property type="entry name" value="BETA_LACTAMASE_A"/>
    <property type="match status" value="1"/>
</dbReference>
<feature type="signal peptide" evidence="2 3">
    <location>
        <begin position="1"/>
        <end position="23"/>
    </location>
</feature>
<feature type="chain" id="PRO_0000016978" description="Beta-lactamase TEM">
    <location>
        <begin position="24"/>
        <end position="286"/>
    </location>
</feature>
<feature type="active site" description="Acyl-ester intermediate">
    <location>
        <position position="68"/>
    </location>
</feature>
<feature type="active site" description="Proton acceptor">
    <location>
        <position position="166"/>
    </location>
</feature>
<feature type="binding site">
    <location>
        <begin position="232"/>
        <end position="234"/>
    </location>
    <ligand>
        <name>substrate</name>
    </ligand>
</feature>
<feature type="disulfide bond">
    <location>
        <begin position="75"/>
        <end position="121"/>
    </location>
</feature>
<feature type="sequence variant" description="In TEM-4.">
    <original>L</original>
    <variation>F</variation>
    <location>
        <position position="19"/>
    </location>
</feature>
<feature type="sequence variant" description="In TEM-2, TEM-3, TEM-8, TEM-16 and TEM-24.">
    <original>Q</original>
    <variation>K</variation>
    <location>
        <position position="37"/>
    </location>
</feature>
<feature type="sequence variant" description="In IRT-4.">
    <original>M</original>
    <variation>L</variation>
    <location>
        <position position="67"/>
    </location>
</feature>
<feature type="sequence variant" description="In TEM-3, TEM-4, TEM-6, TEM-8, TEM-16 and TEM-24.">
    <original>E</original>
    <variation>K</variation>
    <location>
        <position position="102"/>
    </location>
</feature>
<feature type="sequence variant" description="In TEM-6 and TEM-16.">
    <original>R</original>
    <variation>H</variation>
    <location>
        <position position="162"/>
    </location>
</feature>
<feature type="sequence variant" description="In TEM-5, TEM-8 and TEM-24.">
    <original>R</original>
    <variation>S</variation>
    <location>
        <position position="162"/>
    </location>
</feature>
<feature type="sequence variant" description="In TEM-5 and TEM-24.">
    <original>A</original>
    <variation>T</variation>
    <location>
        <position position="235"/>
    </location>
</feature>
<feature type="sequence variant" description="In TEM-3, TEM-4 and TEM-8.">
    <original>G</original>
    <variation>S</variation>
    <location>
        <position position="236"/>
    </location>
</feature>
<feature type="sequence variant" description="In TEM-5 and TEM-24.">
    <original>E</original>
    <variation>K</variation>
    <location>
        <position position="237"/>
    </location>
</feature>
<feature type="sequence variant" description="In TEM-4.">
    <original>T</original>
    <variation>M</variation>
    <location>
        <position position="261"/>
    </location>
</feature>
<feature type="sequence variant" description="In IRT-4.">
    <original>N</original>
    <variation>D</variation>
    <location>
        <position position="272"/>
    </location>
</feature>
<feature type="helix" evidence="7">
    <location>
        <begin position="25"/>
        <end position="38"/>
    </location>
</feature>
<feature type="strand" evidence="7">
    <location>
        <begin position="40"/>
        <end position="48"/>
    </location>
</feature>
<feature type="turn" evidence="7">
    <location>
        <begin position="49"/>
        <end position="51"/>
    </location>
</feature>
<feature type="strand" evidence="7">
    <location>
        <begin position="54"/>
        <end position="59"/>
    </location>
</feature>
<feature type="helix" evidence="7">
    <location>
        <begin position="67"/>
        <end position="69"/>
    </location>
</feature>
<feature type="helix" evidence="7">
    <location>
        <begin position="70"/>
        <end position="83"/>
    </location>
</feature>
<feature type="helix" evidence="7">
    <location>
        <begin position="97"/>
        <end position="99"/>
    </location>
</feature>
<feature type="helix" evidence="7">
    <location>
        <begin position="107"/>
        <end position="109"/>
    </location>
</feature>
<feature type="turn" evidence="7">
    <location>
        <begin position="111"/>
        <end position="113"/>
    </location>
</feature>
<feature type="helix" evidence="7">
    <location>
        <begin position="117"/>
        <end position="126"/>
    </location>
</feature>
<feature type="helix" evidence="7">
    <location>
        <begin position="130"/>
        <end position="139"/>
    </location>
</feature>
<feature type="helix" evidence="7">
    <location>
        <begin position="143"/>
        <end position="152"/>
    </location>
</feature>
<feature type="helix" evidence="7">
    <location>
        <begin position="166"/>
        <end position="168"/>
    </location>
</feature>
<feature type="turn" evidence="6">
    <location>
        <begin position="171"/>
        <end position="173"/>
    </location>
</feature>
<feature type="helix" evidence="7">
    <location>
        <begin position="181"/>
        <end position="193"/>
    </location>
</feature>
<feature type="strand" evidence="10">
    <location>
        <begin position="194"/>
        <end position="197"/>
    </location>
</feature>
<feature type="helix" evidence="7">
    <location>
        <begin position="199"/>
        <end position="210"/>
    </location>
</feature>
<feature type="strand" evidence="8">
    <location>
        <begin position="213"/>
        <end position="215"/>
    </location>
</feature>
<feature type="turn" evidence="7">
    <location>
        <begin position="216"/>
        <end position="218"/>
    </location>
</feature>
<feature type="helix" evidence="7">
    <location>
        <begin position="219"/>
        <end position="222"/>
    </location>
</feature>
<feature type="strand" evidence="7">
    <location>
        <begin position="228"/>
        <end position="235"/>
    </location>
</feature>
<feature type="turn" evidence="11">
    <location>
        <begin position="237"/>
        <end position="239"/>
    </location>
</feature>
<feature type="strand" evidence="7">
    <location>
        <begin position="241"/>
        <end position="249"/>
    </location>
</feature>
<feature type="strand" evidence="7">
    <location>
        <begin position="255"/>
        <end position="263"/>
    </location>
</feature>
<feature type="strand" evidence="9">
    <location>
        <begin position="264"/>
        <end position="266"/>
    </location>
</feature>
<feature type="helix" evidence="7">
    <location>
        <begin position="268"/>
        <end position="284"/>
    </location>
</feature>
<accession>P62593</accession>
<accession>P00810</accession>
<accession>Q47313</accession>
<name>BLAT_ECOLX</name>
<evidence type="ECO:0000255" key="1">
    <source>
        <dbReference type="PROSITE-ProRule" id="PRU10101"/>
    </source>
</evidence>
<evidence type="ECO:0000269" key="2">
    <source>
    </source>
</evidence>
<evidence type="ECO:0000269" key="3">
    <source>
    </source>
</evidence>
<evidence type="ECO:0000305" key="4"/>
<evidence type="ECO:0000305" key="5">
    <source>
    </source>
</evidence>
<evidence type="ECO:0007829" key="6">
    <source>
        <dbReference type="PDB" id="1JWZ"/>
    </source>
</evidence>
<evidence type="ECO:0007829" key="7">
    <source>
        <dbReference type="PDB" id="1M40"/>
    </source>
</evidence>
<evidence type="ECO:0007829" key="8">
    <source>
        <dbReference type="PDB" id="1PZP"/>
    </source>
</evidence>
<evidence type="ECO:0007829" key="9">
    <source>
        <dbReference type="PDB" id="4DXB"/>
    </source>
</evidence>
<evidence type="ECO:0007829" key="10">
    <source>
        <dbReference type="PDB" id="4RX3"/>
    </source>
</evidence>
<evidence type="ECO:0007829" key="11">
    <source>
        <dbReference type="PDB" id="8DE1"/>
    </source>
</evidence>
<protein>
    <recommendedName>
        <fullName>Beta-lactamase TEM</fullName>
        <ecNumber>3.5.2.6</ecNumber>
    </recommendedName>
    <alternativeName>
        <fullName>IRT-4</fullName>
    </alternativeName>
    <alternativeName>
        <fullName>Penicillinase</fullName>
    </alternativeName>
    <alternativeName>
        <fullName>TEM-1</fullName>
    </alternativeName>
    <alternativeName>
        <fullName>TEM-16/CAZ-7</fullName>
    </alternativeName>
    <alternativeName>
        <fullName>TEM-2</fullName>
    </alternativeName>
    <alternativeName>
        <fullName>TEM-24/CAZ-6</fullName>
    </alternativeName>
    <alternativeName>
        <fullName>TEM-3</fullName>
    </alternativeName>
    <alternativeName>
        <fullName>TEM-4</fullName>
    </alternativeName>
    <alternativeName>
        <fullName>TEM-5</fullName>
    </alternativeName>
    <alternativeName>
        <fullName>TEM-6</fullName>
    </alternativeName>
    <alternativeName>
        <fullName>TEM-8/CAZ-2</fullName>
    </alternativeName>
</protein>
<gene>
    <name type="primary">bla</name>
</gene>
<gene>
    <name type="primary">blaT-3</name>
</gene>
<gene>
    <name type="primary">blaT-4</name>
</gene>
<gene>
    <name type="primary">blaT-5</name>
</gene>
<gene>
    <name type="primary">blaT-6</name>
</gene>
<sequence length="286" mass="31515">MSIQHFRVALIPFFAAFCLPVFAHPETLVKVKDAEDQLGARVGYIELDLNSGKILESFRPEERFPMMSTFKVLLCGAVLSRVDAGQEQLGRRIHYSQNDLVEYSPVTEKHLTDGMTVRELCSAAITMSDNTAANLLLTTIGGPKELTAFLHNMGDHVTRLDRWEPELNEAIPNDERDTTMPAAMATTLRKLLTGELLTLASRQQLIDWMEADKVAGPLLRSALPAGWFIADKSGAGERGSRGIIAALGPDGKPSRIVVIYTTGSQATMDERNRQIAEIGASLIKHW</sequence>
<proteinExistence type="evidence at protein level"/>
<keyword id="KW-0002">3D-structure</keyword>
<keyword id="KW-0046">Antibiotic resistance</keyword>
<keyword id="KW-0903">Direct protein sequencing</keyword>
<keyword id="KW-1015">Disulfide bond</keyword>
<keyword id="KW-0378">Hydrolase</keyword>
<keyword id="KW-0614">Plasmid</keyword>
<keyword id="KW-0732">Signal</keyword>
<keyword id="KW-0814">Transposable element</keyword>
<organism>
    <name type="scientific">Escherichia coli</name>
    <dbReference type="NCBI Taxonomy" id="562"/>
    <lineage>
        <taxon>Bacteria</taxon>
        <taxon>Pseudomonadati</taxon>
        <taxon>Pseudomonadota</taxon>
        <taxon>Gammaproteobacteria</taxon>
        <taxon>Enterobacterales</taxon>
        <taxon>Enterobacteriaceae</taxon>
        <taxon>Escherichia</taxon>
    </lineage>
</organism>